<gene>
    <name evidence="1" type="primary">menE</name>
    <name type="ordered locus">SAV1797</name>
</gene>
<reference key="1">
    <citation type="journal article" date="2001" name="Lancet">
        <title>Whole genome sequencing of meticillin-resistant Staphylococcus aureus.</title>
        <authorList>
            <person name="Kuroda M."/>
            <person name="Ohta T."/>
            <person name="Uchiyama I."/>
            <person name="Baba T."/>
            <person name="Yuzawa H."/>
            <person name="Kobayashi I."/>
            <person name="Cui L."/>
            <person name="Oguchi A."/>
            <person name="Aoki K."/>
            <person name="Nagai Y."/>
            <person name="Lian J.-Q."/>
            <person name="Ito T."/>
            <person name="Kanamori M."/>
            <person name="Matsumaru H."/>
            <person name="Maruyama A."/>
            <person name="Murakami H."/>
            <person name="Hosoyama A."/>
            <person name="Mizutani-Ui Y."/>
            <person name="Takahashi N.K."/>
            <person name="Sawano T."/>
            <person name="Inoue R."/>
            <person name="Kaito C."/>
            <person name="Sekimizu K."/>
            <person name="Hirakawa H."/>
            <person name="Kuhara S."/>
            <person name="Goto S."/>
            <person name="Yabuzaki J."/>
            <person name="Kanehisa M."/>
            <person name="Yamashita A."/>
            <person name="Oshima K."/>
            <person name="Furuya K."/>
            <person name="Yoshino C."/>
            <person name="Shiba T."/>
            <person name="Hattori M."/>
            <person name="Ogasawara N."/>
            <person name="Hayashi H."/>
            <person name="Hiramatsu K."/>
        </authorList>
    </citation>
    <scope>NUCLEOTIDE SEQUENCE [LARGE SCALE GENOMIC DNA]</scope>
    <source>
        <strain>Mu50 / ATCC 700699</strain>
    </source>
</reference>
<name>MENE_STAAM</name>
<feature type="chain" id="PRO_0000193167" description="2-succinylbenzoate--CoA ligase">
    <location>
        <begin position="1"/>
        <end position="492"/>
    </location>
</feature>
<sequence>MDFWLYKQAQQNGHHIAITDGQESYTYQNLYCEASLLAKRLKAYQQSRVGLYIDNSIQSIILIHACWLANIEIAMINTRLTPNEMTNQMRSIDVQLIFCTLPLELRGFQIVSLDDIEFAGRDITTNGLLDNTMGIQYDTSNETVVPKESPSNILNTSFNLDDIASIMFTSGTTGPQKAVPQTFRNHYASAIGCKESLGFDRDTNWLSVLPIYHISGLSVLLRAVIEGFTVRIVDKFNAEQILTMIKNERITHISLVPQTLNWLMQQGLHEPYNLQKILLGGAKLSATMIETALQYNLPIYNSFGMTETCSQFLTATPEMLHARPDTVGMPSANVDVKIKNPNKEGHGELMIKGANVMNGYLYPTDLTGTFENGYFNTGDIAEIDHEGYVMIYDRRKDLIISGGENIYPYQIETVAKQFPGISDAVCVGHPDDTWGQVPKLYFVSESDISKAQLIAYLSKHLAKYKVPKHFEKVDTLPYTSTGKLQRNKLYRG</sequence>
<proteinExistence type="inferred from homology"/>
<accession>P63525</accession>
<accession>Q99T73</accession>
<protein>
    <recommendedName>
        <fullName evidence="1">2-succinylbenzoate--CoA ligase</fullName>
        <ecNumber evidence="1">6.2.1.26</ecNumber>
    </recommendedName>
    <alternativeName>
        <fullName evidence="1">o-succinylbenzoyl-CoA synthetase</fullName>
        <shortName evidence="1">OSB-CoA synthetase</shortName>
    </alternativeName>
</protein>
<dbReference type="EC" id="6.2.1.26" evidence="1"/>
<dbReference type="EMBL" id="BA000017">
    <property type="protein sequence ID" value="BAB57959.1"/>
    <property type="molecule type" value="Genomic_DNA"/>
</dbReference>
<dbReference type="RefSeq" id="WP_000348364.1">
    <property type="nucleotide sequence ID" value="NC_002758.2"/>
</dbReference>
<dbReference type="SMR" id="P63525"/>
<dbReference type="DNASU" id="1121771"/>
<dbReference type="KEGG" id="sav:SAV1797"/>
<dbReference type="HOGENOM" id="CLU_000022_59_0_9"/>
<dbReference type="PhylomeDB" id="P63525"/>
<dbReference type="UniPathway" id="UPA00079"/>
<dbReference type="UniPathway" id="UPA01057">
    <property type="reaction ID" value="UER00166"/>
</dbReference>
<dbReference type="Proteomes" id="UP000002481">
    <property type="component" value="Chromosome"/>
</dbReference>
<dbReference type="GO" id="GO:0005524">
    <property type="term" value="F:ATP binding"/>
    <property type="evidence" value="ECO:0007669"/>
    <property type="project" value="UniProtKB-KW"/>
</dbReference>
<dbReference type="GO" id="GO:0008756">
    <property type="term" value="F:o-succinylbenzoate-CoA ligase activity"/>
    <property type="evidence" value="ECO:0007669"/>
    <property type="project" value="UniProtKB-UniRule"/>
</dbReference>
<dbReference type="GO" id="GO:0009234">
    <property type="term" value="P:menaquinone biosynthetic process"/>
    <property type="evidence" value="ECO:0007669"/>
    <property type="project" value="UniProtKB-UniRule"/>
</dbReference>
<dbReference type="CDD" id="cd05912">
    <property type="entry name" value="OSB_CoA_lg"/>
    <property type="match status" value="1"/>
</dbReference>
<dbReference type="Gene3D" id="3.30.300.30">
    <property type="match status" value="1"/>
</dbReference>
<dbReference type="Gene3D" id="3.40.50.12780">
    <property type="entry name" value="N-terminal domain of ligase-like"/>
    <property type="match status" value="1"/>
</dbReference>
<dbReference type="HAMAP" id="MF_00731">
    <property type="entry name" value="MenE"/>
    <property type="match status" value="1"/>
</dbReference>
<dbReference type="InterPro" id="IPR025110">
    <property type="entry name" value="AMP-bd_C"/>
</dbReference>
<dbReference type="InterPro" id="IPR045851">
    <property type="entry name" value="AMP-bd_C_sf"/>
</dbReference>
<dbReference type="InterPro" id="IPR000873">
    <property type="entry name" value="AMP-dep_synth/lig_dom"/>
</dbReference>
<dbReference type="InterPro" id="IPR042099">
    <property type="entry name" value="ANL_N_sf"/>
</dbReference>
<dbReference type="InterPro" id="IPR050237">
    <property type="entry name" value="ATP-dep_AMP-bd_enzyme"/>
</dbReference>
<dbReference type="InterPro" id="IPR010192">
    <property type="entry name" value="MenE"/>
</dbReference>
<dbReference type="NCBIfam" id="TIGR01923">
    <property type="entry name" value="menE"/>
    <property type="match status" value="1"/>
</dbReference>
<dbReference type="PANTHER" id="PTHR43767">
    <property type="entry name" value="LONG-CHAIN-FATTY-ACID--COA LIGASE"/>
    <property type="match status" value="1"/>
</dbReference>
<dbReference type="PANTHER" id="PTHR43767:SF1">
    <property type="entry name" value="NONRIBOSOMAL PEPTIDE SYNTHASE PES1 (EUROFUNG)-RELATED"/>
    <property type="match status" value="1"/>
</dbReference>
<dbReference type="Pfam" id="PF00501">
    <property type="entry name" value="AMP-binding"/>
    <property type="match status" value="1"/>
</dbReference>
<dbReference type="Pfam" id="PF13193">
    <property type="entry name" value="AMP-binding_C"/>
    <property type="match status" value="1"/>
</dbReference>
<dbReference type="SUPFAM" id="SSF56801">
    <property type="entry name" value="Acetyl-CoA synthetase-like"/>
    <property type="match status" value="1"/>
</dbReference>
<organism>
    <name type="scientific">Staphylococcus aureus (strain Mu50 / ATCC 700699)</name>
    <dbReference type="NCBI Taxonomy" id="158878"/>
    <lineage>
        <taxon>Bacteria</taxon>
        <taxon>Bacillati</taxon>
        <taxon>Bacillota</taxon>
        <taxon>Bacilli</taxon>
        <taxon>Bacillales</taxon>
        <taxon>Staphylococcaceae</taxon>
        <taxon>Staphylococcus</taxon>
    </lineage>
</organism>
<keyword id="KW-0067">ATP-binding</keyword>
<keyword id="KW-0436">Ligase</keyword>
<keyword id="KW-0474">Menaquinone biosynthesis</keyword>
<keyword id="KW-0547">Nucleotide-binding</keyword>
<evidence type="ECO:0000255" key="1">
    <source>
        <dbReference type="HAMAP-Rule" id="MF_00731"/>
    </source>
</evidence>
<comment type="function">
    <text evidence="1">Converts 2-succinylbenzoate (OSB) to 2-succinylbenzoyl-CoA (OSB-CoA).</text>
</comment>
<comment type="catalytic activity">
    <reaction evidence="1">
        <text>2-succinylbenzoate + ATP + CoA = 2-succinylbenzoyl-CoA + AMP + diphosphate</text>
        <dbReference type="Rhea" id="RHEA:17009"/>
        <dbReference type="ChEBI" id="CHEBI:18325"/>
        <dbReference type="ChEBI" id="CHEBI:30616"/>
        <dbReference type="ChEBI" id="CHEBI:33019"/>
        <dbReference type="ChEBI" id="CHEBI:57287"/>
        <dbReference type="ChEBI" id="CHEBI:57364"/>
        <dbReference type="ChEBI" id="CHEBI:456215"/>
        <dbReference type="EC" id="6.2.1.26"/>
    </reaction>
</comment>
<comment type="pathway">
    <text evidence="1">Quinol/quinone metabolism; 1,4-dihydroxy-2-naphthoate biosynthesis; 1,4-dihydroxy-2-naphthoate from chorismate: step 5/7.</text>
</comment>
<comment type="pathway">
    <text evidence="1">Quinol/quinone metabolism; menaquinone biosynthesis.</text>
</comment>
<comment type="similarity">
    <text evidence="1">Belongs to the ATP-dependent AMP-binding enzyme family. MenE subfamily.</text>
</comment>